<proteinExistence type="evidence at protein level"/>
<reference key="1">
    <citation type="journal article" date="2001" name="Lancet">
        <title>Whole genome sequencing of meticillin-resistant Staphylococcus aureus.</title>
        <authorList>
            <person name="Kuroda M."/>
            <person name="Ohta T."/>
            <person name="Uchiyama I."/>
            <person name="Baba T."/>
            <person name="Yuzawa H."/>
            <person name="Kobayashi I."/>
            <person name="Cui L."/>
            <person name="Oguchi A."/>
            <person name="Aoki K."/>
            <person name="Nagai Y."/>
            <person name="Lian J.-Q."/>
            <person name="Ito T."/>
            <person name="Kanamori M."/>
            <person name="Matsumaru H."/>
            <person name="Maruyama A."/>
            <person name="Murakami H."/>
            <person name="Hosoyama A."/>
            <person name="Mizutani-Ui Y."/>
            <person name="Takahashi N.K."/>
            <person name="Sawano T."/>
            <person name="Inoue R."/>
            <person name="Kaito C."/>
            <person name="Sekimizu K."/>
            <person name="Hirakawa H."/>
            <person name="Kuhara S."/>
            <person name="Goto S."/>
            <person name="Yabuzaki J."/>
            <person name="Kanehisa M."/>
            <person name="Yamashita A."/>
            <person name="Oshima K."/>
            <person name="Furuya K."/>
            <person name="Yoshino C."/>
            <person name="Shiba T."/>
            <person name="Hattori M."/>
            <person name="Ogasawara N."/>
            <person name="Hayashi H."/>
            <person name="Hiramatsu K."/>
        </authorList>
    </citation>
    <scope>NUCLEOTIDE SEQUENCE [LARGE SCALE GENOMIC DNA]</scope>
    <source>
        <strain>N315</strain>
    </source>
</reference>
<reference key="2">
    <citation type="submission" date="2007-10" db="UniProtKB">
        <title>Shotgun proteomic analysis of total and membrane protein extracts of S. aureus strain N315.</title>
        <authorList>
            <person name="Vaezzadeh A.R."/>
            <person name="Deshusses J."/>
            <person name="Lescuyer P."/>
            <person name="Hochstrasser D.F."/>
        </authorList>
    </citation>
    <scope>IDENTIFICATION BY MASS SPECTROMETRY [LARGE SCALE ANALYSIS]</scope>
    <source>
        <strain>N315</strain>
    </source>
</reference>
<accession>P65177</accession>
<accession>Q99WX2</accession>
<gene>
    <name evidence="1" type="primary">tarI2</name>
    <name type="ordered locus">SA0241</name>
</gene>
<name>TARI2_STAAN</name>
<comment type="function">
    <text evidence="1">Catalyzes the transfer of the cytidylyl group of CTP to D-ribitol 5-phosphate.</text>
</comment>
<comment type="catalytic activity">
    <reaction evidence="1">
        <text>D-ribitol 5-phosphate + CTP + H(+) = CDP-L-ribitol + diphosphate</text>
        <dbReference type="Rhea" id="RHEA:12456"/>
        <dbReference type="ChEBI" id="CHEBI:15378"/>
        <dbReference type="ChEBI" id="CHEBI:33019"/>
        <dbReference type="ChEBI" id="CHEBI:37563"/>
        <dbReference type="ChEBI" id="CHEBI:57608"/>
        <dbReference type="ChEBI" id="CHEBI:57695"/>
        <dbReference type="EC" id="2.7.7.40"/>
    </reaction>
</comment>
<comment type="pathway">
    <text evidence="1">Cell wall biogenesis; poly(ribitol phosphate) teichoic acid biosynthesis.</text>
</comment>
<comment type="similarity">
    <text evidence="1">Belongs to the IspD/TarI cytidylyltransferase family. TarI subfamily.</text>
</comment>
<protein>
    <recommendedName>
        <fullName evidence="1">Ribitol-5-phosphate cytidylyltransferase 2</fullName>
        <ecNumber evidence="1">2.7.7.40</ecNumber>
    </recommendedName>
</protein>
<organism>
    <name type="scientific">Staphylococcus aureus (strain N315)</name>
    <dbReference type="NCBI Taxonomy" id="158879"/>
    <lineage>
        <taxon>Bacteria</taxon>
        <taxon>Bacillati</taxon>
        <taxon>Bacillota</taxon>
        <taxon>Bacilli</taxon>
        <taxon>Bacillales</taxon>
        <taxon>Staphylococcaceae</taxon>
        <taxon>Staphylococcus</taxon>
    </lineage>
</organism>
<feature type="chain" id="PRO_0000075617" description="Ribitol-5-phosphate cytidylyltransferase 2">
    <location>
        <begin position="1"/>
        <end position="238"/>
    </location>
</feature>
<feature type="binding site" evidence="1">
    <location>
        <begin position="7"/>
        <end position="10"/>
    </location>
    <ligand>
        <name>CTP</name>
        <dbReference type="ChEBI" id="CHEBI:37563"/>
    </ligand>
</feature>
<feature type="binding site" evidence="1">
    <location>
        <begin position="81"/>
        <end position="87"/>
    </location>
    <ligand>
        <name>CTP</name>
        <dbReference type="ChEBI" id="CHEBI:37563"/>
    </ligand>
</feature>
<feature type="site" description="Transition state stabilizer" evidence="1">
    <location>
        <position position="14"/>
    </location>
</feature>
<feature type="site" description="Transition state stabilizer" evidence="1">
    <location>
        <position position="22"/>
    </location>
</feature>
<feature type="site" description="Positions ribitol 5-phosphate for the nucleophilic attack" evidence="1">
    <location>
        <position position="160"/>
    </location>
</feature>
<feature type="site" description="Positions ribitol 5-phosphate for the nucleophilic attack" evidence="1">
    <location>
        <position position="217"/>
    </location>
</feature>
<sequence length="238" mass="26575">MIYAGILAGGIGSRMGNVPLPKQFLDIDNKPILIHTIEKFILVSEFNEIIIATPAQWISHTQDILKKYNITDQRVKVVAGGTDRNETIMNIIDHIRNVNGINNDDVIVTHDAVRPFLTQRIIKENIEVAAKYGAVDTVIEAIDTIVMSKDKQNIHSIPVRNEMYQGQTPQSFNIKLLQDSYRALSSEQKEILSDACKIIVESGHAVKLVRGELYNIKVTTPYDLKVANAIIQGDIADD</sequence>
<evidence type="ECO:0000255" key="1">
    <source>
        <dbReference type="HAMAP-Rule" id="MF_02068"/>
    </source>
</evidence>
<dbReference type="EC" id="2.7.7.40" evidence="1"/>
<dbReference type="EMBL" id="BA000018">
    <property type="protein sequence ID" value="BAB41465.1"/>
    <property type="molecule type" value="Genomic_DNA"/>
</dbReference>
<dbReference type="PIR" id="F89788">
    <property type="entry name" value="F89788"/>
</dbReference>
<dbReference type="RefSeq" id="WP_000638475.1">
    <property type="nucleotide sequence ID" value="NC_002745.2"/>
</dbReference>
<dbReference type="SMR" id="P65177"/>
<dbReference type="EnsemblBacteria" id="BAB41465">
    <property type="protein sequence ID" value="BAB41465"/>
    <property type="gene ID" value="BAB41465"/>
</dbReference>
<dbReference type="KEGG" id="sau:SA0241"/>
<dbReference type="HOGENOM" id="CLU_061281_2_3_9"/>
<dbReference type="UniPathway" id="UPA00790"/>
<dbReference type="GO" id="GO:0050518">
    <property type="term" value="F:2-C-methyl-D-erythritol 4-phosphate cytidylyltransferase activity"/>
    <property type="evidence" value="ECO:0007669"/>
    <property type="project" value="TreeGrafter"/>
</dbReference>
<dbReference type="GO" id="GO:0047349">
    <property type="term" value="F:D-ribitol-5-phosphate cytidylyltransferase activity"/>
    <property type="evidence" value="ECO:0007669"/>
    <property type="project" value="UniProtKB-UniRule"/>
</dbReference>
<dbReference type="GO" id="GO:0071555">
    <property type="term" value="P:cell wall organization"/>
    <property type="evidence" value="ECO:0007669"/>
    <property type="project" value="UniProtKB-KW"/>
</dbReference>
<dbReference type="GO" id="GO:0008299">
    <property type="term" value="P:isoprenoid biosynthetic process"/>
    <property type="evidence" value="ECO:0007669"/>
    <property type="project" value="InterPro"/>
</dbReference>
<dbReference type="GO" id="GO:1902012">
    <property type="term" value="P:poly(ribitol phosphate) teichoic acid biosynthetic process"/>
    <property type="evidence" value="ECO:0007669"/>
    <property type="project" value="UniProtKB-UniRule"/>
</dbReference>
<dbReference type="CDD" id="cd02516">
    <property type="entry name" value="CDP-ME_synthetase"/>
    <property type="match status" value="1"/>
</dbReference>
<dbReference type="FunFam" id="3.90.550.10:FF:000003">
    <property type="entry name" value="2-C-methyl-D-erythritol 4-phosphate cytidylyltransferase"/>
    <property type="match status" value="1"/>
</dbReference>
<dbReference type="Gene3D" id="3.90.550.10">
    <property type="entry name" value="Spore Coat Polysaccharide Biosynthesis Protein SpsA, Chain A"/>
    <property type="match status" value="1"/>
</dbReference>
<dbReference type="HAMAP" id="MF_02068">
    <property type="entry name" value="TarI"/>
    <property type="match status" value="1"/>
</dbReference>
<dbReference type="InterPro" id="IPR034683">
    <property type="entry name" value="IspD/TarI"/>
</dbReference>
<dbReference type="InterPro" id="IPR050088">
    <property type="entry name" value="IspD/TarI_cytidylyltransf_bact"/>
</dbReference>
<dbReference type="InterPro" id="IPR018294">
    <property type="entry name" value="ISPD_synthase_CS"/>
</dbReference>
<dbReference type="InterPro" id="IPR029044">
    <property type="entry name" value="Nucleotide-diphossugar_trans"/>
</dbReference>
<dbReference type="InterPro" id="IPR034709">
    <property type="entry name" value="TarI"/>
</dbReference>
<dbReference type="NCBIfam" id="NF001183">
    <property type="entry name" value="PRK00155.1-3"/>
    <property type="match status" value="1"/>
</dbReference>
<dbReference type="NCBIfam" id="NF009924">
    <property type="entry name" value="PRK13385.1"/>
    <property type="match status" value="1"/>
</dbReference>
<dbReference type="PANTHER" id="PTHR32125">
    <property type="entry name" value="2-C-METHYL-D-ERYTHRITOL 4-PHOSPHATE CYTIDYLYLTRANSFERASE, CHLOROPLASTIC"/>
    <property type="match status" value="1"/>
</dbReference>
<dbReference type="PANTHER" id="PTHR32125:SF8">
    <property type="entry name" value="RIBITOL-5-PHOSPHATE CYTIDYLYLTRANSFERASE"/>
    <property type="match status" value="1"/>
</dbReference>
<dbReference type="Pfam" id="PF01128">
    <property type="entry name" value="IspD"/>
    <property type="match status" value="1"/>
</dbReference>
<dbReference type="SUPFAM" id="SSF53448">
    <property type="entry name" value="Nucleotide-diphospho-sugar transferases"/>
    <property type="match status" value="1"/>
</dbReference>
<dbReference type="PROSITE" id="PS01295">
    <property type="entry name" value="ISPD"/>
    <property type="match status" value="1"/>
</dbReference>
<keyword id="KW-0961">Cell wall biogenesis/degradation</keyword>
<keyword id="KW-0548">Nucleotidyltransferase</keyword>
<keyword id="KW-0777">Teichoic acid biosynthesis</keyword>
<keyword id="KW-0808">Transferase</keyword>